<proteinExistence type="evidence at transcript level"/>
<accession>P0CV57</accession>
<sequence length="720" mass="80663">MRSAFYVAIVLLVAAGSQTAAKCDQDEPQHAPSNNFMASFDRVDQMLPSQVLQASRNLKDDFMFSAGDEERTPLAPSKLLKKVKFPDSVISTASAMRTTEDVNAIEIASKNLNQLRSNKRQRIVQTPNKMAGQAVVTPPALDIPLVSVANEKSLKLPKRRTRKRPTAVVENAARSVPQHDYHSAPQDSFKINAEAPNARLYNQLITQKALQLEKNEHLEKNAREEELVSFDLLHLFEKSAHPAAGNRQEANAIKVASKNLIQLESNTRKRNNVVGQVKRKRPNRDRSPVSVANGKPLGLAKRRKSNHPTAVAKNAASSVKQHDHRVAPPEPSRLDAKALDGRINNQQITQKASQLDKNEHVDKRSWREELVSVDELMHLFDEFDKSAHPTTVSRQETSAIEATSKSLIPAESSTHKGIALTSNDVVEVGVHAPPDPDKFLVLVADNMPMILAERLKTTSPTAIMNNAARFVTQHYERLAHLESSTTNAEALSGRLINQPITQKALQLDKSQHVDDVEDIEKQFSRAVGHFWHLREVNDKSAHTTAVYRQTVPDDWNAEYAKGPKTLSQDGKINNDVKEVHAAFLEAFNLPFHQYPQETAIMLKIVQRKNKSSPNNFRTFKTFKLLAQNQMILSHLQELLAPDLKKLLGYGNMALPITLKNLKEALNVKLVIMYDLFIIFCHERVDLVKDLPPKPTPSQWIFEISTLSSGNKNRQVLPPHD</sequence>
<comment type="function">
    <text evidence="4">Secreted effector that acts as an elicitor that induces cell death in host plant cells.</text>
</comment>
<comment type="subcellular location">
    <subcellularLocation>
        <location evidence="4">Secreted</location>
    </subcellularLocation>
    <subcellularLocation>
        <location evidence="4">Host nucleus</location>
    </subcellularLocation>
    <text evidence="4">Accumulates at the margin of the nucleolus, but is absent within it.</text>
</comment>
<comment type="domain">
    <text evidence="7">The RxLR-dEER motif acts to carry the protein into the host cell cytoplasm through binding to cell surface phosphatidylinositol-3-phosphate.</text>
</comment>
<comment type="similarity">
    <text evidence="6">Belongs to the RxLR effector family.</text>
</comment>
<evidence type="ECO:0000255" key="1"/>
<evidence type="ECO:0000255" key="2">
    <source>
        <dbReference type="PROSITE-ProRule" id="PRU00498"/>
    </source>
</evidence>
<evidence type="ECO:0000256" key="3">
    <source>
        <dbReference type="SAM" id="MobiDB-lite"/>
    </source>
</evidence>
<evidence type="ECO:0000269" key="4">
    <source>
    </source>
</evidence>
<evidence type="ECO:0000303" key="5">
    <source>
    </source>
</evidence>
<evidence type="ECO:0000305" key="6"/>
<evidence type="ECO:0000305" key="7">
    <source>
    </source>
</evidence>
<name>RL138_PLAVT</name>
<reference key="1">
    <citation type="journal article" date="2018" name="Front. Plant Sci.">
        <title>In planta functional analysis and subcellular localization of the oomycete pathogen Plasmopara viticola candidate RXLR effector repertoire.</title>
        <authorList>
            <person name="Liu Y."/>
            <person name="Lan X."/>
            <person name="Song S."/>
            <person name="Yin L."/>
            <person name="Dry I.B."/>
            <person name="Qu J."/>
            <person name="Xiang J."/>
            <person name="Lu J."/>
        </authorList>
    </citation>
    <scope>NUCLEOTIDE SEQUENCE [MRNA]</scope>
    <scope>DOMAIN</scope>
    <scope>FUNCTION</scope>
    <scope>SUBCELLULAR LOCATION</scope>
</reference>
<protein>
    <recommendedName>
        <fullName evidence="5">Secreted RxLR effector protein 138</fullName>
    </recommendedName>
</protein>
<organism>
    <name type="scientific">Plasmopara viticola</name>
    <name type="common">Downy mildew of grapevine</name>
    <name type="synonym">Botrytis viticola</name>
    <dbReference type="NCBI Taxonomy" id="143451"/>
    <lineage>
        <taxon>Eukaryota</taxon>
        <taxon>Sar</taxon>
        <taxon>Stramenopiles</taxon>
        <taxon>Oomycota</taxon>
        <taxon>Peronosporales</taxon>
        <taxon>Peronosporaceae</taxon>
        <taxon>Plasmopara</taxon>
    </lineage>
</organism>
<dbReference type="GlyCosmos" id="P0CV57">
    <property type="glycosylation" value="1 site, No reported glycans"/>
</dbReference>
<dbReference type="GO" id="GO:0005576">
    <property type="term" value="C:extracellular region"/>
    <property type="evidence" value="ECO:0007669"/>
    <property type="project" value="UniProtKB-SubCell"/>
</dbReference>
<dbReference type="GO" id="GO:0042025">
    <property type="term" value="C:host cell nucleus"/>
    <property type="evidence" value="ECO:0007669"/>
    <property type="project" value="UniProtKB-SubCell"/>
</dbReference>
<feature type="signal peptide" evidence="1">
    <location>
        <begin position="1"/>
        <end position="20"/>
    </location>
</feature>
<feature type="chain" id="PRO_0000447967" description="Secreted RxLR effector protein 138">
    <location>
        <begin position="21"/>
        <end position="720"/>
    </location>
</feature>
<feature type="region of interest" description="Disordered" evidence="3">
    <location>
        <begin position="264"/>
        <end position="335"/>
    </location>
</feature>
<feature type="short sequence motif" description="RxLR-dEER" evidence="7">
    <location>
        <begin position="56"/>
        <end position="71"/>
    </location>
</feature>
<feature type="compositionally biased region" description="Basic and acidic residues" evidence="3">
    <location>
        <begin position="320"/>
        <end position="335"/>
    </location>
</feature>
<feature type="glycosylation site" description="N-linked (GlcNAc...) asparagine" evidence="2">
    <location>
        <position position="609"/>
    </location>
</feature>
<keyword id="KW-0325">Glycoprotein</keyword>
<keyword id="KW-1048">Host nucleus</keyword>
<keyword id="KW-0964">Secreted</keyword>
<keyword id="KW-0732">Signal</keyword>
<keyword id="KW-0843">Virulence</keyword>
<gene>
    <name evidence="5" type="primary">RXLR138</name>
</gene>